<gene>
    <name type="ordered locus">HI_0984</name>
</gene>
<keyword id="KW-1185">Reference proteome</keyword>
<name>Y984_HAEIN</name>
<accession>P43908</accession>
<reference key="1">
    <citation type="journal article" date="1995" name="J. Bacteriol.">
        <title>DNA sequence and characterization of Haemophilus influenzae dprA+, a gene required for chromosomal but not plasmid DNA transformation.</title>
        <authorList>
            <person name="Karudapuram S."/>
            <person name="Zhao X."/>
            <person name="Barcak G.J."/>
        </authorList>
    </citation>
    <scope>NUCLEOTIDE SEQUENCE [GENOMIC DNA]</scope>
    <source>
        <strain>ATCC 51907 / DSM 11121 / KW20 / Rd</strain>
    </source>
</reference>
<reference key="2">
    <citation type="journal article" date="1995" name="Science">
        <title>Whole-genome random sequencing and assembly of Haemophilus influenzae Rd.</title>
        <authorList>
            <person name="Fleischmann R.D."/>
            <person name="Adams M.D."/>
            <person name="White O."/>
            <person name="Clayton R.A."/>
            <person name="Kirkness E.F."/>
            <person name="Kerlavage A.R."/>
            <person name="Bult C.J."/>
            <person name="Tomb J.-F."/>
            <person name="Dougherty B.A."/>
            <person name="Merrick J.M."/>
            <person name="McKenney K."/>
            <person name="Sutton G.G."/>
            <person name="FitzHugh W."/>
            <person name="Fields C.A."/>
            <person name="Gocayne J.D."/>
            <person name="Scott J.D."/>
            <person name="Shirley R."/>
            <person name="Liu L.-I."/>
            <person name="Glodek A."/>
            <person name="Kelley J.M."/>
            <person name="Weidman J.F."/>
            <person name="Phillips C.A."/>
            <person name="Spriggs T."/>
            <person name="Hedblom E."/>
            <person name="Cotton M.D."/>
            <person name="Utterback T.R."/>
            <person name="Hanna M.C."/>
            <person name="Nguyen D.T."/>
            <person name="Saudek D.M."/>
            <person name="Brandon R.C."/>
            <person name="Fine L.D."/>
            <person name="Fritchman J.L."/>
            <person name="Fuhrmann J.L."/>
            <person name="Geoghagen N.S.M."/>
            <person name="Gnehm C.L."/>
            <person name="McDonald L.A."/>
            <person name="Small K.V."/>
            <person name="Fraser C.M."/>
            <person name="Smith H.O."/>
            <person name="Venter J.C."/>
        </authorList>
    </citation>
    <scope>NUCLEOTIDE SEQUENCE [LARGE SCALE GENOMIC DNA]</scope>
    <source>
        <strain>ATCC 51907 / DSM 11121 / KW20 / Rd</strain>
    </source>
</reference>
<feature type="chain" id="PRO_0000203987" description="UPF0246 protein HI_0984">
    <location>
        <begin position="1"/>
        <end position="258"/>
    </location>
</feature>
<dbReference type="EMBL" id="U18657">
    <property type="protein sequence ID" value="AAA70112.1"/>
    <property type="status" value="ALT_INIT"/>
    <property type="molecule type" value="Genomic_DNA"/>
</dbReference>
<dbReference type="EMBL" id="L42023">
    <property type="protein sequence ID" value="AAC22645.1"/>
    <property type="status" value="ALT_INIT"/>
    <property type="molecule type" value="Genomic_DNA"/>
</dbReference>
<dbReference type="PIR" id="E64163">
    <property type="entry name" value="E64163"/>
</dbReference>
<dbReference type="RefSeq" id="NP_439147.2">
    <property type="nucleotide sequence ID" value="NC_000907.1"/>
</dbReference>
<dbReference type="SMR" id="P43908"/>
<dbReference type="STRING" id="71421.HI_0984"/>
<dbReference type="EnsemblBacteria" id="AAC22645">
    <property type="protein sequence ID" value="AAC22645"/>
    <property type="gene ID" value="HI_0984"/>
</dbReference>
<dbReference type="KEGG" id="hin:HI_0984"/>
<dbReference type="PATRIC" id="fig|71421.8.peg.1027"/>
<dbReference type="eggNOG" id="COG3022">
    <property type="taxonomic scope" value="Bacteria"/>
</dbReference>
<dbReference type="HOGENOM" id="CLU_061989_0_0_6"/>
<dbReference type="OrthoDB" id="9777133at2"/>
<dbReference type="PhylomeDB" id="P43908"/>
<dbReference type="BioCyc" id="HINF71421:G1GJ1-1026-MONOMER"/>
<dbReference type="Proteomes" id="UP000000579">
    <property type="component" value="Chromosome"/>
</dbReference>
<dbReference type="GO" id="GO:0005829">
    <property type="term" value="C:cytosol"/>
    <property type="evidence" value="ECO:0000318"/>
    <property type="project" value="GO_Central"/>
</dbReference>
<dbReference type="GO" id="GO:0033194">
    <property type="term" value="P:response to hydroperoxide"/>
    <property type="evidence" value="ECO:0000318"/>
    <property type="project" value="GO_Central"/>
</dbReference>
<dbReference type="HAMAP" id="MF_00652">
    <property type="entry name" value="UPF0246"/>
    <property type="match status" value="1"/>
</dbReference>
<dbReference type="InterPro" id="IPR005583">
    <property type="entry name" value="YaaA"/>
</dbReference>
<dbReference type="NCBIfam" id="NF002541">
    <property type="entry name" value="PRK02101.1-1"/>
    <property type="match status" value="1"/>
</dbReference>
<dbReference type="NCBIfam" id="NF002542">
    <property type="entry name" value="PRK02101.1-3"/>
    <property type="match status" value="1"/>
</dbReference>
<dbReference type="PANTHER" id="PTHR30283:SF4">
    <property type="entry name" value="PEROXIDE STRESS RESISTANCE PROTEIN YAAA"/>
    <property type="match status" value="1"/>
</dbReference>
<dbReference type="PANTHER" id="PTHR30283">
    <property type="entry name" value="PEROXIDE STRESS RESPONSE PROTEIN YAAA"/>
    <property type="match status" value="1"/>
</dbReference>
<dbReference type="Pfam" id="PF03883">
    <property type="entry name" value="H2O2_YaaD"/>
    <property type="match status" value="1"/>
</dbReference>
<sequence length="258" mass="29254">MLAIISPAKTLDFESAVKNFPVSQPHFTDYSEQLIEVCRKLSPQDLSSLMSISDKLAGLNAARFAEWTKIHNENNSRPALFAFKGDVYTGLDADSLSEDDVIFAQSHLRMLSGLYGLLKPLDLMQPYRLEMGTKLANPKGKDLYAFWGNVITQAVQQAIDEQGDNVLVNLASDEYYKSVKESQINAKIIKPVFLDNKNGKYKVISFYAKKARGLMCRYIIQHHLTEIEQLKEFDLGGYWFDSASSTETEFVFKRDINE</sequence>
<evidence type="ECO:0000305" key="1"/>
<organism>
    <name type="scientific">Haemophilus influenzae (strain ATCC 51907 / DSM 11121 / KW20 / Rd)</name>
    <dbReference type="NCBI Taxonomy" id="71421"/>
    <lineage>
        <taxon>Bacteria</taxon>
        <taxon>Pseudomonadati</taxon>
        <taxon>Pseudomonadota</taxon>
        <taxon>Gammaproteobacteria</taxon>
        <taxon>Pasteurellales</taxon>
        <taxon>Pasteurellaceae</taxon>
        <taxon>Haemophilus</taxon>
    </lineage>
</organism>
<proteinExistence type="inferred from homology"/>
<comment type="similarity">
    <text evidence="1">Belongs to the UPF0246 family.</text>
</comment>
<comment type="sequence caution" evidence="1">
    <conflict type="erroneous initiation">
        <sequence resource="EMBL-CDS" id="AAA70112"/>
    </conflict>
</comment>
<comment type="sequence caution" evidence="1">
    <conflict type="erroneous initiation">
        <sequence resource="EMBL-CDS" id="AAC22645"/>
    </conflict>
</comment>
<protein>
    <recommendedName>
        <fullName>UPF0246 protein HI_0984</fullName>
    </recommendedName>
</protein>